<reference key="1">
    <citation type="journal article" date="2007" name="Curr. Biol.">
        <title>Reduced genome of the thioautotrophic intracellular symbiont in a deep-sea clam, Calyptogena okutanii.</title>
        <authorList>
            <person name="Kuwahara H."/>
            <person name="Yoshida T."/>
            <person name="Takaki Y."/>
            <person name="Shimamura S."/>
            <person name="Nishi S."/>
            <person name="Harada M."/>
            <person name="Matsuyama K."/>
            <person name="Takishita K."/>
            <person name="Kawato M."/>
            <person name="Uematsu K."/>
            <person name="Fujiwara Y."/>
            <person name="Sato T."/>
            <person name="Kato C."/>
            <person name="Kitagawa M."/>
            <person name="Kato I."/>
            <person name="Maruyama T."/>
        </authorList>
    </citation>
    <scope>NUCLEOTIDE SEQUENCE [LARGE SCALE GENOMIC DNA]</scope>
    <source>
        <strain>HA</strain>
    </source>
</reference>
<evidence type="ECO:0000255" key="1">
    <source>
        <dbReference type="HAMAP-Rule" id="MF_00406"/>
    </source>
</evidence>
<evidence type="ECO:0000305" key="2"/>
<keyword id="KW-0963">Cytoplasm</keyword>
<keyword id="KW-0441">Lipid A biosynthesis</keyword>
<keyword id="KW-0444">Lipid biosynthesis</keyword>
<keyword id="KW-0443">Lipid metabolism</keyword>
<keyword id="KW-0456">Lyase</keyword>
<keyword id="KW-1185">Reference proteome</keyword>
<gene>
    <name evidence="1" type="primary">fabZ</name>
    <name type="ordered locus">COSY_0509</name>
</gene>
<proteinExistence type="inferred from homology"/>
<accession>A5CWN9</accession>
<sequence length="145" mass="16292">MNIQDVKNYLPHRYPFLLIDRVLELEVGKSIVALKNVTFNEPQFIGHFPDQPIMPGVMIVEALAQATGILAFKAEVSKPTNGQIYMLVGIDKVRFKRMVEPGDQLRLEVGIVTVKRGIWKFKCKATVDSQTITSAELMCTQKATD</sequence>
<name>FABZ_VESOH</name>
<protein>
    <recommendedName>
        <fullName evidence="1">3-hydroxyacyl-[acyl-carrier-protein] dehydratase FabZ</fullName>
        <ecNumber evidence="1">4.2.1.59</ecNumber>
    </recommendedName>
    <alternativeName>
        <fullName evidence="1">(3R)-hydroxymyristoyl-[acyl-carrier-protein] dehydratase</fullName>
        <shortName evidence="1">(3R)-hydroxymyristoyl-ACP dehydrase</shortName>
    </alternativeName>
    <alternativeName>
        <fullName evidence="1">Beta-hydroxyacyl-ACP dehydratase</fullName>
    </alternativeName>
</protein>
<dbReference type="EC" id="4.2.1.59" evidence="1"/>
<dbReference type="EMBL" id="AP009247">
    <property type="protein sequence ID" value="BAF61628.1"/>
    <property type="status" value="ALT_INIT"/>
    <property type="molecule type" value="Genomic_DNA"/>
</dbReference>
<dbReference type="RefSeq" id="WP_011929898.1">
    <property type="nucleotide sequence ID" value="NC_009465.1"/>
</dbReference>
<dbReference type="SMR" id="A5CWN9"/>
<dbReference type="STRING" id="412965.COSY_0509"/>
<dbReference type="KEGG" id="vok:COSY_0509"/>
<dbReference type="eggNOG" id="COG0764">
    <property type="taxonomic scope" value="Bacteria"/>
</dbReference>
<dbReference type="HOGENOM" id="CLU_078912_1_0_6"/>
<dbReference type="OrthoDB" id="9772788at2"/>
<dbReference type="Proteomes" id="UP000000247">
    <property type="component" value="Chromosome"/>
</dbReference>
<dbReference type="GO" id="GO:0005737">
    <property type="term" value="C:cytoplasm"/>
    <property type="evidence" value="ECO:0007669"/>
    <property type="project" value="UniProtKB-SubCell"/>
</dbReference>
<dbReference type="GO" id="GO:0016020">
    <property type="term" value="C:membrane"/>
    <property type="evidence" value="ECO:0007669"/>
    <property type="project" value="GOC"/>
</dbReference>
<dbReference type="GO" id="GO:0019171">
    <property type="term" value="F:(3R)-hydroxyacyl-[acyl-carrier-protein] dehydratase activity"/>
    <property type="evidence" value="ECO:0007669"/>
    <property type="project" value="UniProtKB-EC"/>
</dbReference>
<dbReference type="GO" id="GO:0006633">
    <property type="term" value="P:fatty acid biosynthetic process"/>
    <property type="evidence" value="ECO:0007669"/>
    <property type="project" value="UniProtKB-UniRule"/>
</dbReference>
<dbReference type="GO" id="GO:0009245">
    <property type="term" value="P:lipid A biosynthetic process"/>
    <property type="evidence" value="ECO:0007669"/>
    <property type="project" value="UniProtKB-UniRule"/>
</dbReference>
<dbReference type="CDD" id="cd01288">
    <property type="entry name" value="FabZ"/>
    <property type="match status" value="1"/>
</dbReference>
<dbReference type="FunFam" id="3.10.129.10:FF:000001">
    <property type="entry name" value="3-hydroxyacyl-[acyl-carrier-protein] dehydratase FabZ"/>
    <property type="match status" value="1"/>
</dbReference>
<dbReference type="Gene3D" id="3.10.129.10">
    <property type="entry name" value="Hotdog Thioesterase"/>
    <property type="match status" value="1"/>
</dbReference>
<dbReference type="HAMAP" id="MF_00406">
    <property type="entry name" value="FabZ"/>
    <property type="match status" value="1"/>
</dbReference>
<dbReference type="InterPro" id="IPR013114">
    <property type="entry name" value="FabA_FabZ"/>
</dbReference>
<dbReference type="InterPro" id="IPR010084">
    <property type="entry name" value="FabZ"/>
</dbReference>
<dbReference type="InterPro" id="IPR029069">
    <property type="entry name" value="HotDog_dom_sf"/>
</dbReference>
<dbReference type="NCBIfam" id="TIGR01750">
    <property type="entry name" value="fabZ"/>
    <property type="match status" value="1"/>
</dbReference>
<dbReference type="NCBIfam" id="NF000582">
    <property type="entry name" value="PRK00006.1"/>
    <property type="match status" value="1"/>
</dbReference>
<dbReference type="PANTHER" id="PTHR30272">
    <property type="entry name" value="3-HYDROXYACYL-[ACYL-CARRIER-PROTEIN] DEHYDRATASE"/>
    <property type="match status" value="1"/>
</dbReference>
<dbReference type="PANTHER" id="PTHR30272:SF1">
    <property type="entry name" value="3-HYDROXYACYL-[ACYL-CARRIER-PROTEIN] DEHYDRATASE"/>
    <property type="match status" value="1"/>
</dbReference>
<dbReference type="Pfam" id="PF07977">
    <property type="entry name" value="FabA"/>
    <property type="match status" value="1"/>
</dbReference>
<dbReference type="SUPFAM" id="SSF54637">
    <property type="entry name" value="Thioesterase/thiol ester dehydrase-isomerase"/>
    <property type="match status" value="1"/>
</dbReference>
<feature type="chain" id="PRO_0000340815" description="3-hydroxyacyl-[acyl-carrier-protein] dehydratase FabZ">
    <location>
        <begin position="1"/>
        <end position="145"/>
    </location>
</feature>
<feature type="active site" evidence="1">
    <location>
        <position position="47"/>
    </location>
</feature>
<organism>
    <name type="scientific">Vesicomyosocius okutanii subsp. Calyptogena okutanii (strain HA)</name>
    <dbReference type="NCBI Taxonomy" id="412965"/>
    <lineage>
        <taxon>Bacteria</taxon>
        <taxon>Pseudomonadati</taxon>
        <taxon>Pseudomonadota</taxon>
        <taxon>Gammaproteobacteria</taxon>
        <taxon>Candidatus Pseudothioglobaceae</taxon>
        <taxon>Candidatus Vesicomyosocius</taxon>
    </lineage>
</organism>
<comment type="function">
    <text evidence="1">Involved in unsaturated fatty acids biosynthesis. Catalyzes the dehydration of short chain beta-hydroxyacyl-ACPs and long chain saturated and unsaturated beta-hydroxyacyl-ACPs.</text>
</comment>
<comment type="catalytic activity">
    <reaction evidence="1">
        <text>a (3R)-hydroxyacyl-[ACP] = a (2E)-enoyl-[ACP] + H2O</text>
        <dbReference type="Rhea" id="RHEA:13097"/>
        <dbReference type="Rhea" id="RHEA-COMP:9925"/>
        <dbReference type="Rhea" id="RHEA-COMP:9945"/>
        <dbReference type="ChEBI" id="CHEBI:15377"/>
        <dbReference type="ChEBI" id="CHEBI:78784"/>
        <dbReference type="ChEBI" id="CHEBI:78827"/>
        <dbReference type="EC" id="4.2.1.59"/>
    </reaction>
</comment>
<comment type="subcellular location">
    <subcellularLocation>
        <location evidence="1">Cytoplasm</location>
    </subcellularLocation>
</comment>
<comment type="similarity">
    <text evidence="1">Belongs to the thioester dehydratase family. FabZ subfamily.</text>
</comment>
<comment type="sequence caution" evidence="2">
    <conflict type="erroneous initiation">
        <sequence resource="EMBL-CDS" id="BAF61628"/>
    </conflict>
</comment>